<reference key="1">
    <citation type="journal article" date="2004" name="Proc. Natl. Acad. Sci. U.S.A.">
        <title>Genome sequence of Picrophilus torridus and its implications for life around pH 0.</title>
        <authorList>
            <person name="Fuetterer O."/>
            <person name="Angelov A."/>
            <person name="Liesegang H."/>
            <person name="Gottschalk G."/>
            <person name="Schleper C."/>
            <person name="Schepers B."/>
            <person name="Dock C."/>
            <person name="Antranikian G."/>
            <person name="Liebl W."/>
        </authorList>
    </citation>
    <scope>NUCLEOTIDE SEQUENCE [LARGE SCALE GENOMIC DNA]</scope>
    <source>
        <strain>ATCC 700027 / DSM 9790 / JCM 10055 / NBRC 100828 / KAW 2/3</strain>
    </source>
</reference>
<protein>
    <recommendedName>
        <fullName evidence="1">Protoheme IX farnesyltransferase 2</fullName>
        <ecNumber evidence="1">2.5.1.141</ecNumber>
    </recommendedName>
    <alternativeName>
        <fullName evidence="1">Heme B farnesyltransferase 2</fullName>
    </alternativeName>
    <alternativeName>
        <fullName evidence="1">Heme O synthase 2</fullName>
    </alternativeName>
</protein>
<keyword id="KW-1003">Cell membrane</keyword>
<keyword id="KW-0350">Heme biosynthesis</keyword>
<keyword id="KW-0472">Membrane</keyword>
<keyword id="KW-0808">Transferase</keyword>
<keyword id="KW-0812">Transmembrane</keyword>
<keyword id="KW-1133">Transmembrane helix</keyword>
<sequence length="289" mass="32307">MSMTSQIMKITKLEITILIDIVAIAAFLAVPGSTNHIYDLLILIFAGTLASMSASIFNNIYDMDIDPKMKRTSSRSQILNANTRSLFFIIATAMVLLSFVTSFILLNPVTSAFILGGFASYVLLYTIILKRRTSLNIVIGGIAGSFPALAGWASITGSVSATSLFIAFLVFMWTPTHFWNLSVNNVDDYKKSNIPMLPAVVGIKRTEFWIMVNTSILVIYSILPLFIKEIHVGLLYMPMAAVMDALLIYYVARPMINNYNKKDFKKAFHFSNMYMLMLLIGIMLILVKF</sequence>
<feature type="chain" id="PRO_0000327197" description="Protoheme IX farnesyltransferase 2">
    <location>
        <begin position="1"/>
        <end position="289"/>
    </location>
</feature>
<feature type="transmembrane region" description="Helical" evidence="1">
    <location>
        <begin position="13"/>
        <end position="33"/>
    </location>
</feature>
<feature type="transmembrane region" description="Helical" evidence="1">
    <location>
        <begin position="37"/>
        <end position="57"/>
    </location>
</feature>
<feature type="transmembrane region" description="Helical" evidence="1">
    <location>
        <begin position="86"/>
        <end position="106"/>
    </location>
</feature>
<feature type="transmembrane region" description="Helical" evidence="1">
    <location>
        <begin position="109"/>
        <end position="129"/>
    </location>
</feature>
<feature type="transmembrane region" description="Helical" evidence="1">
    <location>
        <begin position="137"/>
        <end position="157"/>
    </location>
</feature>
<feature type="transmembrane region" description="Helical" evidence="1">
    <location>
        <begin position="159"/>
        <end position="179"/>
    </location>
</feature>
<feature type="transmembrane region" description="Helical" evidence="1">
    <location>
        <begin position="207"/>
        <end position="227"/>
    </location>
</feature>
<feature type="transmembrane region" description="Helical" evidence="1">
    <location>
        <begin position="232"/>
        <end position="252"/>
    </location>
</feature>
<feature type="transmembrane region" description="Helical" evidence="1">
    <location>
        <begin position="267"/>
        <end position="287"/>
    </location>
</feature>
<evidence type="ECO:0000255" key="1">
    <source>
        <dbReference type="HAMAP-Rule" id="MF_00154"/>
    </source>
</evidence>
<gene>
    <name evidence="1" type="primary">ctaB2</name>
    <name type="ordered locus">PTO1307</name>
</gene>
<organism>
    <name type="scientific">Picrophilus torridus (strain ATCC 700027 / DSM 9790 / JCM 10055 / NBRC 100828 / KAW 2/3)</name>
    <dbReference type="NCBI Taxonomy" id="1122961"/>
    <lineage>
        <taxon>Archaea</taxon>
        <taxon>Methanobacteriati</taxon>
        <taxon>Thermoplasmatota</taxon>
        <taxon>Thermoplasmata</taxon>
        <taxon>Thermoplasmatales</taxon>
        <taxon>Picrophilaceae</taxon>
        <taxon>Picrophilus</taxon>
    </lineage>
</organism>
<proteinExistence type="inferred from homology"/>
<comment type="function">
    <text evidence="1">Converts heme B (protoheme IX) to heme O by substitution of the vinyl group on carbon 2 of heme B porphyrin ring with a hydroxyethyl farnesyl side group.</text>
</comment>
<comment type="catalytic activity">
    <reaction evidence="1">
        <text>heme b + (2E,6E)-farnesyl diphosphate + H2O = Fe(II)-heme o + diphosphate</text>
        <dbReference type="Rhea" id="RHEA:28070"/>
        <dbReference type="ChEBI" id="CHEBI:15377"/>
        <dbReference type="ChEBI" id="CHEBI:33019"/>
        <dbReference type="ChEBI" id="CHEBI:60344"/>
        <dbReference type="ChEBI" id="CHEBI:60530"/>
        <dbReference type="ChEBI" id="CHEBI:175763"/>
        <dbReference type="EC" id="2.5.1.141"/>
    </reaction>
</comment>
<comment type="pathway">
    <text evidence="1">Porphyrin-containing compound metabolism; heme O biosynthesis; heme O from protoheme: step 1/1.</text>
</comment>
<comment type="subcellular location">
    <subcellularLocation>
        <location evidence="1">Cell membrane</location>
        <topology evidence="1">Multi-pass membrane protein</topology>
    </subcellularLocation>
</comment>
<comment type="miscellaneous">
    <text evidence="1">Carbon 2 of the heme B porphyrin ring is defined according to the Fischer nomenclature.</text>
</comment>
<comment type="similarity">
    <text evidence="1">Belongs to the UbiA prenyltransferase family. Protoheme IX farnesyltransferase subfamily.</text>
</comment>
<dbReference type="EC" id="2.5.1.141" evidence="1"/>
<dbReference type="EMBL" id="AE017261">
    <property type="protein sequence ID" value="AAT43892.1"/>
    <property type="molecule type" value="Genomic_DNA"/>
</dbReference>
<dbReference type="RefSeq" id="WP_011178108.1">
    <property type="nucleotide sequence ID" value="NC_005877.1"/>
</dbReference>
<dbReference type="SMR" id="Q6KZG0"/>
<dbReference type="FunCoup" id="Q6KZG0">
    <property type="interactions" value="200"/>
</dbReference>
<dbReference type="STRING" id="263820.PTO1307"/>
<dbReference type="PaxDb" id="263820-PTO1307"/>
<dbReference type="GeneID" id="2844344"/>
<dbReference type="KEGG" id="pto:PTO1307"/>
<dbReference type="PATRIC" id="fig|263820.9.peg.1359"/>
<dbReference type="eggNOG" id="arCOG00479">
    <property type="taxonomic scope" value="Archaea"/>
</dbReference>
<dbReference type="HOGENOM" id="CLU_029631_0_1_2"/>
<dbReference type="InParanoid" id="Q6KZG0"/>
<dbReference type="OrthoDB" id="131615at2157"/>
<dbReference type="UniPathway" id="UPA00834">
    <property type="reaction ID" value="UER00712"/>
</dbReference>
<dbReference type="Proteomes" id="UP000000438">
    <property type="component" value="Chromosome"/>
</dbReference>
<dbReference type="GO" id="GO:0005886">
    <property type="term" value="C:plasma membrane"/>
    <property type="evidence" value="ECO:0007669"/>
    <property type="project" value="UniProtKB-SubCell"/>
</dbReference>
<dbReference type="GO" id="GO:0008495">
    <property type="term" value="F:protoheme IX farnesyltransferase activity"/>
    <property type="evidence" value="ECO:0007669"/>
    <property type="project" value="UniProtKB-UniRule"/>
</dbReference>
<dbReference type="GO" id="GO:0048034">
    <property type="term" value="P:heme O biosynthetic process"/>
    <property type="evidence" value="ECO:0007669"/>
    <property type="project" value="UniProtKB-UniRule"/>
</dbReference>
<dbReference type="CDD" id="cd13957">
    <property type="entry name" value="PT_UbiA_Cox10"/>
    <property type="match status" value="1"/>
</dbReference>
<dbReference type="Gene3D" id="1.10.357.140">
    <property type="entry name" value="UbiA prenyltransferase"/>
    <property type="match status" value="1"/>
</dbReference>
<dbReference type="HAMAP" id="MF_00154">
    <property type="entry name" value="CyoE_CtaB"/>
    <property type="match status" value="1"/>
</dbReference>
<dbReference type="InterPro" id="IPR006369">
    <property type="entry name" value="Protohaem_IX_farnesylTrfase"/>
</dbReference>
<dbReference type="InterPro" id="IPR000537">
    <property type="entry name" value="UbiA_prenyltransferase"/>
</dbReference>
<dbReference type="InterPro" id="IPR044878">
    <property type="entry name" value="UbiA_sf"/>
</dbReference>
<dbReference type="NCBIfam" id="TIGR01473">
    <property type="entry name" value="cyoE_ctaB"/>
    <property type="match status" value="1"/>
</dbReference>
<dbReference type="PANTHER" id="PTHR43448">
    <property type="entry name" value="PROTOHEME IX FARNESYLTRANSFERASE, MITOCHONDRIAL"/>
    <property type="match status" value="1"/>
</dbReference>
<dbReference type="PANTHER" id="PTHR43448:SF2">
    <property type="entry name" value="PROTOHEME IX FARNESYLTRANSFERASE, MITOCHONDRIAL"/>
    <property type="match status" value="1"/>
</dbReference>
<dbReference type="Pfam" id="PF01040">
    <property type="entry name" value="UbiA"/>
    <property type="match status" value="1"/>
</dbReference>
<dbReference type="PROSITE" id="PS00943">
    <property type="entry name" value="UBIA"/>
    <property type="match status" value="1"/>
</dbReference>
<accession>Q6KZG0</accession>
<name>COXX2_PICTO</name>